<protein>
    <recommendedName>
        <fullName evidence="1">UPF0434 protein BMEA_B0871</fullName>
    </recommendedName>
</protein>
<reference key="1">
    <citation type="submission" date="2009-03" db="EMBL/GenBank/DDBJ databases">
        <title>Brucella melitensis ATCC 23457 whole genome shotgun sequencing project.</title>
        <authorList>
            <person name="Setubal J.C."/>
            <person name="Boyle S."/>
            <person name="Crasta O.R."/>
            <person name="Gillespie J.J."/>
            <person name="Kenyon R.W."/>
            <person name="Lu J."/>
            <person name="Mane S."/>
            <person name="Nagrani S."/>
            <person name="Shallom J.M."/>
            <person name="Shallom S."/>
            <person name="Shukla M."/>
            <person name="Snyder E.E."/>
            <person name="Sobral B.W."/>
            <person name="Wattam A.R."/>
            <person name="Will R."/>
            <person name="Williams K."/>
            <person name="Yoo H."/>
            <person name="Munk C."/>
            <person name="Tapia R."/>
            <person name="Han C."/>
            <person name="Detter J.C."/>
            <person name="Bruce D."/>
            <person name="Brettin T.S."/>
        </authorList>
    </citation>
    <scope>NUCLEOTIDE SEQUENCE [LARGE SCALE GENOMIC DNA]</scope>
    <source>
        <strain>ATCC 23457</strain>
    </source>
</reference>
<dbReference type="EMBL" id="CP001489">
    <property type="protein sequence ID" value="ACO02671.1"/>
    <property type="molecule type" value="Genomic_DNA"/>
</dbReference>
<dbReference type="RefSeq" id="WP_002965755.1">
    <property type="nucleotide sequence ID" value="NC_012442.1"/>
</dbReference>
<dbReference type="SMR" id="C0RM38"/>
<dbReference type="KEGG" id="bmi:BMEA_B0871"/>
<dbReference type="HOGENOM" id="CLU_155659_2_2_5"/>
<dbReference type="Proteomes" id="UP000001748">
    <property type="component" value="Chromosome II"/>
</dbReference>
<dbReference type="GO" id="GO:0005829">
    <property type="term" value="C:cytosol"/>
    <property type="evidence" value="ECO:0007669"/>
    <property type="project" value="TreeGrafter"/>
</dbReference>
<dbReference type="FunFam" id="2.20.25.10:FF:000002">
    <property type="entry name" value="UPF0434 protein YcaR"/>
    <property type="match status" value="1"/>
</dbReference>
<dbReference type="Gene3D" id="2.20.25.10">
    <property type="match status" value="1"/>
</dbReference>
<dbReference type="HAMAP" id="MF_01187">
    <property type="entry name" value="UPF0434"/>
    <property type="match status" value="1"/>
</dbReference>
<dbReference type="InterPro" id="IPR005651">
    <property type="entry name" value="Trm112-like"/>
</dbReference>
<dbReference type="PANTHER" id="PTHR33505:SF4">
    <property type="entry name" value="PROTEIN PREY, MITOCHONDRIAL"/>
    <property type="match status" value="1"/>
</dbReference>
<dbReference type="PANTHER" id="PTHR33505">
    <property type="entry name" value="ZGC:162634"/>
    <property type="match status" value="1"/>
</dbReference>
<dbReference type="Pfam" id="PF03966">
    <property type="entry name" value="Trm112p"/>
    <property type="match status" value="1"/>
</dbReference>
<dbReference type="SUPFAM" id="SSF158997">
    <property type="entry name" value="Trm112p-like"/>
    <property type="match status" value="1"/>
</dbReference>
<organism>
    <name type="scientific">Brucella melitensis biotype 2 (strain ATCC 23457)</name>
    <dbReference type="NCBI Taxonomy" id="546272"/>
    <lineage>
        <taxon>Bacteria</taxon>
        <taxon>Pseudomonadati</taxon>
        <taxon>Pseudomonadota</taxon>
        <taxon>Alphaproteobacteria</taxon>
        <taxon>Hyphomicrobiales</taxon>
        <taxon>Brucellaceae</taxon>
        <taxon>Brucella/Ochrobactrum group</taxon>
        <taxon>Brucella</taxon>
    </lineage>
</organism>
<accession>C0RM38</accession>
<sequence length="64" mass="7126">MDDKVETGNIDVRLLELLVCPLTKGPLEYDAERSELVSRKARLAYPVRGGIPIMLPSEARSLTE</sequence>
<comment type="similarity">
    <text evidence="1">Belongs to the UPF0434 family.</text>
</comment>
<feature type="chain" id="PRO_1000164479" description="UPF0434 protein BMEA_B0871">
    <location>
        <begin position="1"/>
        <end position="64"/>
    </location>
</feature>
<evidence type="ECO:0000255" key="1">
    <source>
        <dbReference type="HAMAP-Rule" id="MF_01187"/>
    </source>
</evidence>
<proteinExistence type="inferred from homology"/>
<gene>
    <name type="ordered locus">BMEA_B0871</name>
</gene>
<name>Y3171_BRUMB</name>